<comment type="function">
    <text evidence="4 5">Receptor-like kinase protein that regulates meristem size during inflorescence and flower development. Promotes vegetative meristem growth and restricts inflorescence and floral meristem growth. Based on additive and synergistic phenotypes of double mutants, it is probable that unlike CLV1 and CLV2 in A.thaliana, TD1 and FAE2 do not function exclusively in a single pathway. However, KN-1 and TD1 do function in a linear pathway to maintain vegetative meristem homeostasis, but they may interact with different partners during development.</text>
</comment>
<comment type="catalytic activity">
    <reaction>
        <text>L-seryl-[protein] + ATP = O-phospho-L-seryl-[protein] + ADP + H(+)</text>
        <dbReference type="Rhea" id="RHEA:17989"/>
        <dbReference type="Rhea" id="RHEA-COMP:9863"/>
        <dbReference type="Rhea" id="RHEA-COMP:11604"/>
        <dbReference type="ChEBI" id="CHEBI:15378"/>
        <dbReference type="ChEBI" id="CHEBI:29999"/>
        <dbReference type="ChEBI" id="CHEBI:30616"/>
        <dbReference type="ChEBI" id="CHEBI:83421"/>
        <dbReference type="ChEBI" id="CHEBI:456216"/>
        <dbReference type="EC" id="2.7.11.1"/>
    </reaction>
</comment>
<comment type="catalytic activity">
    <reaction>
        <text>L-threonyl-[protein] + ATP = O-phospho-L-threonyl-[protein] + ADP + H(+)</text>
        <dbReference type="Rhea" id="RHEA:46608"/>
        <dbReference type="Rhea" id="RHEA-COMP:11060"/>
        <dbReference type="Rhea" id="RHEA-COMP:11605"/>
        <dbReference type="ChEBI" id="CHEBI:15378"/>
        <dbReference type="ChEBI" id="CHEBI:30013"/>
        <dbReference type="ChEBI" id="CHEBI:30616"/>
        <dbReference type="ChEBI" id="CHEBI:61977"/>
        <dbReference type="ChEBI" id="CHEBI:456216"/>
        <dbReference type="EC" id="2.7.11.1"/>
    </reaction>
</comment>
<comment type="subcellular location">
    <subcellularLocation>
        <location evidence="6">Membrane</location>
        <topology evidence="6">Single-pass membrane protein</topology>
    </subcellularLocation>
</comment>
<comment type="tissue specificity">
    <text evidence="4">Highly expressed in the apex of the vegetative seedlings. Lower expression in young leaves, ears and tassels, embryos and roots. Not expressed in the shoot meristem itself. Detected in the three outermost layers of the inflorescence meristem, and on its flanks at positions of prospective spikelet pair meristems. Not confined to meristematic cells but also detected in primordia of glumes, lemmas and stamens.</text>
</comment>
<comment type="disruption phenotype">
    <text evidence="4">Fasciation. Flattened and wider ears with irregular rows of seeds. Thicker rachis of tassels and increased floral organ numbers. Reduced vegetative growth.</text>
</comment>
<comment type="similarity">
    <text evidence="2">Belongs to the protein kinase superfamily. Ser/Thr protein kinase family.</text>
</comment>
<dbReference type="EC" id="2.7.11.1"/>
<dbReference type="RefSeq" id="XP_008645089.1">
    <property type="nucleotide sequence ID" value="XM_008646867.1"/>
</dbReference>
<dbReference type="SMR" id="P0DL10"/>
<dbReference type="FunCoup" id="P0DL10">
    <property type="interactions" value="2246"/>
</dbReference>
<dbReference type="STRING" id="4577.P0DL10"/>
<dbReference type="PaxDb" id="4577-GRMZM2G300133_P01"/>
<dbReference type="EnsemblPlants" id="Zm00001eb228140_T001">
    <property type="protein sequence ID" value="Zm00001eb228140_P001"/>
    <property type="gene ID" value="Zm00001eb228140"/>
</dbReference>
<dbReference type="Gramene" id="Zm00001eb228140_T001">
    <property type="protein sequence ID" value="Zm00001eb228140_P001"/>
    <property type="gene ID" value="Zm00001eb228140"/>
</dbReference>
<dbReference type="KEGG" id="zma:103626458"/>
<dbReference type="MaizeGDB" id="9023073"/>
<dbReference type="eggNOG" id="ENOG502QQ4T">
    <property type="taxonomic scope" value="Eukaryota"/>
</dbReference>
<dbReference type="HOGENOM" id="CLU_000288_22_1_1"/>
<dbReference type="InParanoid" id="P0DL10"/>
<dbReference type="OMA" id="GQFMVFN"/>
<dbReference type="OrthoDB" id="676979at2759"/>
<dbReference type="Proteomes" id="UP000007305">
    <property type="component" value="Chromosome 5"/>
</dbReference>
<dbReference type="ExpressionAtlas" id="P0DL10">
    <property type="expression patterns" value="baseline and differential"/>
</dbReference>
<dbReference type="GO" id="GO:0016020">
    <property type="term" value="C:membrane"/>
    <property type="evidence" value="ECO:0000318"/>
    <property type="project" value="GO_Central"/>
</dbReference>
<dbReference type="GO" id="GO:0005524">
    <property type="term" value="F:ATP binding"/>
    <property type="evidence" value="ECO:0007669"/>
    <property type="project" value="UniProtKB-KW"/>
</dbReference>
<dbReference type="GO" id="GO:0106310">
    <property type="term" value="F:protein serine kinase activity"/>
    <property type="evidence" value="ECO:0007669"/>
    <property type="project" value="RHEA"/>
</dbReference>
<dbReference type="GO" id="GO:0004674">
    <property type="term" value="F:protein serine/threonine kinase activity"/>
    <property type="evidence" value="ECO:0007669"/>
    <property type="project" value="UniProtKB-KW"/>
</dbReference>
<dbReference type="GO" id="GO:0033612">
    <property type="term" value="F:receptor serine/threonine kinase binding"/>
    <property type="evidence" value="ECO:0000318"/>
    <property type="project" value="GO_Central"/>
</dbReference>
<dbReference type="GO" id="GO:0030154">
    <property type="term" value="P:cell differentiation"/>
    <property type="evidence" value="ECO:0007669"/>
    <property type="project" value="UniProtKB-KW"/>
</dbReference>
<dbReference type="GO" id="GO:0010080">
    <property type="term" value="P:regulation of floral meristem growth"/>
    <property type="evidence" value="ECO:0007669"/>
    <property type="project" value="EnsemblPlants"/>
</dbReference>
<dbReference type="GO" id="GO:0048833">
    <property type="term" value="P:specification of floral organ number"/>
    <property type="evidence" value="ECO:0007669"/>
    <property type="project" value="EnsemblPlants"/>
</dbReference>
<dbReference type="FunFam" id="1.10.510.10:FF:000201">
    <property type="entry name" value="Leucine-rich repeat receptor-like serine/threonine-protein kinase"/>
    <property type="match status" value="1"/>
</dbReference>
<dbReference type="FunFam" id="3.30.200.20:FF:000292">
    <property type="entry name" value="Leucine-rich repeat receptor-like serine/threonine-protein kinase BAM1"/>
    <property type="match status" value="1"/>
</dbReference>
<dbReference type="FunFam" id="3.80.10.10:FF:000570">
    <property type="entry name" value="Leucine-rich repeat receptor-like serine/threonine-protein kinase BAM1"/>
    <property type="match status" value="1"/>
</dbReference>
<dbReference type="FunFam" id="3.80.10.10:FF:000108">
    <property type="entry name" value="Leucine-rich repeat receptor-like serine/threonine-protein kinase BAM3"/>
    <property type="match status" value="1"/>
</dbReference>
<dbReference type="Gene3D" id="3.30.200.20">
    <property type="entry name" value="Phosphorylase Kinase, domain 1"/>
    <property type="match status" value="1"/>
</dbReference>
<dbReference type="Gene3D" id="3.80.10.10">
    <property type="entry name" value="Ribonuclease Inhibitor"/>
    <property type="match status" value="4"/>
</dbReference>
<dbReference type="Gene3D" id="1.10.510.10">
    <property type="entry name" value="Transferase(Phosphotransferase) domain 1"/>
    <property type="match status" value="1"/>
</dbReference>
<dbReference type="InterPro" id="IPR011009">
    <property type="entry name" value="Kinase-like_dom_sf"/>
</dbReference>
<dbReference type="InterPro" id="IPR001611">
    <property type="entry name" value="Leu-rich_rpt"/>
</dbReference>
<dbReference type="InterPro" id="IPR003591">
    <property type="entry name" value="Leu-rich_rpt_typical-subtyp"/>
</dbReference>
<dbReference type="InterPro" id="IPR032675">
    <property type="entry name" value="LRR_dom_sf"/>
</dbReference>
<dbReference type="InterPro" id="IPR013210">
    <property type="entry name" value="LRR_N_plant-typ"/>
</dbReference>
<dbReference type="InterPro" id="IPR051716">
    <property type="entry name" value="Plant_RL_S/T_kinase"/>
</dbReference>
<dbReference type="InterPro" id="IPR000719">
    <property type="entry name" value="Prot_kinase_dom"/>
</dbReference>
<dbReference type="InterPro" id="IPR001245">
    <property type="entry name" value="Ser-Thr/Tyr_kinase_cat_dom"/>
</dbReference>
<dbReference type="InterPro" id="IPR008271">
    <property type="entry name" value="Ser/Thr_kinase_AS"/>
</dbReference>
<dbReference type="PANTHER" id="PTHR48053">
    <property type="entry name" value="LEUCINE RICH REPEAT FAMILY PROTEIN, EXPRESSED"/>
    <property type="match status" value="1"/>
</dbReference>
<dbReference type="PANTHER" id="PTHR48053:SF131">
    <property type="entry name" value="LEUCINE-RICH REPEAT RECEPTOR-LIKE SERINE_THREONINE-PROTEIN KINASE BAM2"/>
    <property type="match status" value="1"/>
</dbReference>
<dbReference type="Pfam" id="PF00560">
    <property type="entry name" value="LRR_1"/>
    <property type="match status" value="6"/>
</dbReference>
<dbReference type="Pfam" id="PF13855">
    <property type="entry name" value="LRR_8"/>
    <property type="match status" value="2"/>
</dbReference>
<dbReference type="Pfam" id="PF08263">
    <property type="entry name" value="LRRNT_2"/>
    <property type="match status" value="1"/>
</dbReference>
<dbReference type="Pfam" id="PF07714">
    <property type="entry name" value="PK_Tyr_Ser-Thr"/>
    <property type="match status" value="1"/>
</dbReference>
<dbReference type="SMART" id="SM00369">
    <property type="entry name" value="LRR_TYP"/>
    <property type="match status" value="8"/>
</dbReference>
<dbReference type="SMART" id="SM00220">
    <property type="entry name" value="S_TKc"/>
    <property type="match status" value="1"/>
</dbReference>
<dbReference type="SUPFAM" id="SSF52058">
    <property type="entry name" value="L domain-like"/>
    <property type="match status" value="1"/>
</dbReference>
<dbReference type="SUPFAM" id="SSF56112">
    <property type="entry name" value="Protein kinase-like (PK-like)"/>
    <property type="match status" value="1"/>
</dbReference>
<dbReference type="SUPFAM" id="SSF52047">
    <property type="entry name" value="RNI-like"/>
    <property type="match status" value="1"/>
</dbReference>
<dbReference type="PROSITE" id="PS50011">
    <property type="entry name" value="PROTEIN_KINASE_DOM"/>
    <property type="match status" value="1"/>
</dbReference>
<dbReference type="PROSITE" id="PS00108">
    <property type="entry name" value="PROTEIN_KINASE_ST"/>
    <property type="match status" value="1"/>
</dbReference>
<accession>P0DL10</accession>
<gene>
    <name type="primary">TD1</name>
    <name type="synonym">KIN5</name>
    <name evidence="6" type="ORF">GRMZM2G300133</name>
</gene>
<name>TD1_MAIZE</name>
<feature type="signal peptide" evidence="1">
    <location>
        <begin position="1"/>
        <end position="26"/>
    </location>
</feature>
<feature type="chain" id="PRO_0000422040" description="Leucine-rich repeat receptor-like kinase protein THICK TASSEL DWARF1">
    <location>
        <begin position="27"/>
        <end position="996"/>
    </location>
</feature>
<feature type="transmembrane region" description="Helical" evidence="1">
    <location>
        <begin position="646"/>
        <end position="666"/>
    </location>
</feature>
<feature type="repeat" description="LRR 1">
    <location>
        <begin position="78"/>
        <end position="103"/>
    </location>
</feature>
<feature type="repeat" description="LRR 2">
    <location>
        <begin position="104"/>
        <end position="127"/>
    </location>
</feature>
<feature type="repeat" description="LRR 3">
    <location>
        <begin position="128"/>
        <end position="151"/>
    </location>
</feature>
<feature type="repeat" description="LRR 4">
    <location>
        <begin position="153"/>
        <end position="178"/>
    </location>
</feature>
<feature type="repeat" description="LRR 5">
    <location>
        <begin position="180"/>
        <end position="201"/>
    </location>
</feature>
<feature type="repeat" description="LRR 6">
    <location>
        <begin position="202"/>
        <end position="226"/>
    </location>
</feature>
<feature type="repeat" description="LRR 7">
    <location>
        <begin position="251"/>
        <end position="275"/>
    </location>
</feature>
<feature type="repeat" description="LRR 8">
    <location>
        <begin position="276"/>
        <end position="299"/>
    </location>
</feature>
<feature type="repeat" description="LRR 9">
    <location>
        <begin position="300"/>
        <end position="323"/>
    </location>
</feature>
<feature type="repeat" description="LRR 10">
    <location>
        <begin position="325"/>
        <end position="349"/>
    </location>
</feature>
<feature type="repeat" description="LRR 11">
    <location>
        <begin position="351"/>
        <end position="371"/>
    </location>
</feature>
<feature type="repeat" description="LRR 12">
    <location>
        <begin position="372"/>
        <end position="395"/>
    </location>
</feature>
<feature type="repeat" description="LRR 13">
    <location>
        <begin position="397"/>
        <end position="419"/>
    </location>
</feature>
<feature type="repeat" description="LRR 14">
    <location>
        <begin position="420"/>
        <end position="443"/>
    </location>
</feature>
<feature type="repeat" description="LRR 15">
    <location>
        <begin position="445"/>
        <end position="466"/>
    </location>
</feature>
<feature type="repeat" description="LRR 16">
    <location>
        <begin position="467"/>
        <end position="490"/>
    </location>
</feature>
<feature type="repeat" description="LRR 17">
    <location>
        <begin position="491"/>
        <end position="514"/>
    </location>
</feature>
<feature type="repeat" description="LRR 18">
    <location>
        <begin position="516"/>
        <end position="538"/>
    </location>
</feature>
<feature type="repeat" description="LRR 19">
    <location>
        <begin position="539"/>
        <end position="562"/>
    </location>
</feature>
<feature type="repeat" description="LRR 20">
    <location>
        <begin position="563"/>
        <end position="586"/>
    </location>
</feature>
<feature type="repeat" description="LRR 21">
    <location>
        <begin position="587"/>
        <end position="611"/>
    </location>
</feature>
<feature type="domain" description="Protein kinase" evidence="2">
    <location>
        <begin position="703"/>
        <end position="978"/>
    </location>
</feature>
<feature type="active site" description="Proton acceptor" evidence="2 3">
    <location>
        <position position="828"/>
    </location>
</feature>
<feature type="binding site" evidence="2">
    <location>
        <begin position="709"/>
        <end position="717"/>
    </location>
    <ligand>
        <name>ATP</name>
        <dbReference type="ChEBI" id="CHEBI:30616"/>
    </ligand>
</feature>
<feature type="binding site" evidence="2">
    <location>
        <position position="731"/>
    </location>
    <ligand>
        <name>ATP</name>
        <dbReference type="ChEBI" id="CHEBI:30616"/>
    </ligand>
</feature>
<sequence>MPPPTFLLGLLLLLLLAAAAPAPASATPERDAYALSRLKASLVPSATNSTSAPLSDWDPAATPPAHCAFTGVTCDAATSRVVAINLTAVPLHGGALPPEVALLDALASLTVANCYLRGRLPPALASMPALRHLNLSNNNLSGPFPPPPPAAYFPALEIVDVYNNNLSGPLPPLGAPHARSLRYLHLGGNYFNGSIPDTFGDLAALEYLGLNGNALSGRVPPSLSRLSRLREMYVGYYNQYSGGVPREFGALQSLVRLDMSSCTLTGPIPPELARLSRLDTLFLALNQLTGEIPPELGALTSLRSLDLSINDLAGEIPASFAALTNLKLLNLFRNHLRGEIPAFLGDFPFLEVLQVWDNNLTGPLPPALGRNGRLKTLDVTSNHLTGTIPPDLCAGRNLQLLVLMDNGFFGSIPESLGDCKTLTRVRLGKNFLTGPVPAGLFDLPQANMLELTDNMLTGELPDVIAGDKIGMLMLGNNRIGGRIPAAIGNLPALQTLSLESNNFSGPLPPEIGRLRNLTRLNASGNALTGGIPRELMGCASLGAVDLSRNGLTGEIPDTVTSLKILCTLNVSRNRLSGELPAAMANMTSLTTLDVSYNQLSGPVPMQGQFLVFNESSFVGNPGLCSACPPSSGGARSPFSLRRWDSKKLLVWLVVLLTLLVLAVLGARKAHEAWREAARRRSGAWKMTAFQKLDFSADDVVECLKEDNIIGKGGAGIVYHGVTRGGAELAIKRLVGRGCGDHDRGFTAEVTTLGRIRHRNIVRLLGFVSNREANLLLYEYMPNGSLGEMLHGGKGGHLGWEARARVAAEAARGLCYLHHDCAPRIIHRDVKSNNILLDSAFEAHVADFGLAKFLGGGGATSECMSAIAGSYGYIAPEYAYTLRVDEKSDVYSFGVVLLELITGRRPVGSFGDGVDIVHWVRKVTADAAAAEEPVLLVADRRLAPEPVPLLADLYRVAMACVEEASTARPTMREVVHMLSTSAAAQPDVPHALCKVVD</sequence>
<keyword id="KW-0067">ATP-binding</keyword>
<keyword id="KW-0217">Developmental protein</keyword>
<keyword id="KW-0221">Differentiation</keyword>
<keyword id="KW-0418">Kinase</keyword>
<keyword id="KW-0433">Leucine-rich repeat</keyword>
<keyword id="KW-0472">Membrane</keyword>
<keyword id="KW-0547">Nucleotide-binding</keyword>
<keyword id="KW-0675">Receptor</keyword>
<keyword id="KW-1185">Reference proteome</keyword>
<keyword id="KW-0677">Repeat</keyword>
<keyword id="KW-0723">Serine/threonine-protein kinase</keyword>
<keyword id="KW-0732">Signal</keyword>
<keyword id="KW-0808">Transferase</keyword>
<keyword id="KW-0812">Transmembrane</keyword>
<keyword id="KW-1133">Transmembrane helix</keyword>
<evidence type="ECO:0000255" key="1"/>
<evidence type="ECO:0000255" key="2">
    <source>
        <dbReference type="PROSITE-ProRule" id="PRU00159"/>
    </source>
</evidence>
<evidence type="ECO:0000255" key="3">
    <source>
        <dbReference type="PROSITE-ProRule" id="PRU10027"/>
    </source>
</evidence>
<evidence type="ECO:0000269" key="4">
    <source>
    </source>
</evidence>
<evidence type="ECO:0000269" key="5">
    <source>
    </source>
</evidence>
<evidence type="ECO:0000305" key="6"/>
<reference key="1">
    <citation type="journal article" date="2005" name="Development">
        <title>thick tassel dwarf1 encodes a putative maize ortholog of the Arabidopsis CLAVATA1 leucine-rich repeat receptor-like kinase.</title>
        <authorList>
            <person name="Bommert P."/>
            <person name="Lunde C."/>
            <person name="Nardmann J."/>
            <person name="Vollbrecht E."/>
            <person name="Running M."/>
            <person name="Jackson D."/>
            <person name="Hake S."/>
            <person name="Werr W."/>
        </authorList>
    </citation>
    <scope>NUCLEOTIDE SEQUENCE [MRNA]</scope>
    <scope>FUNCTION</scope>
    <scope>DISRUPTION PHENOTYPE</scope>
    <scope>TISSUE SPECIFICITY</scope>
</reference>
<reference key="2">
    <citation type="journal article" date="2009" name="Genetics">
        <title>The interaction of knotted1 and thick tassel dwarf1 in vegetative and reproductive meristems of maize.</title>
        <authorList>
            <person name="Lunde C."/>
            <person name="Hake S."/>
        </authorList>
    </citation>
    <scope>FUNCTION</scope>
</reference>
<proteinExistence type="evidence at transcript level"/>
<organism>
    <name type="scientific">Zea mays</name>
    <name type="common">Maize</name>
    <dbReference type="NCBI Taxonomy" id="4577"/>
    <lineage>
        <taxon>Eukaryota</taxon>
        <taxon>Viridiplantae</taxon>
        <taxon>Streptophyta</taxon>
        <taxon>Embryophyta</taxon>
        <taxon>Tracheophyta</taxon>
        <taxon>Spermatophyta</taxon>
        <taxon>Magnoliopsida</taxon>
        <taxon>Liliopsida</taxon>
        <taxon>Poales</taxon>
        <taxon>Poaceae</taxon>
        <taxon>PACMAD clade</taxon>
        <taxon>Panicoideae</taxon>
        <taxon>Andropogonodae</taxon>
        <taxon>Andropogoneae</taxon>
        <taxon>Tripsacinae</taxon>
        <taxon>Zea</taxon>
    </lineage>
</organism>
<protein>
    <recommendedName>
        <fullName>Leucine-rich repeat receptor-like kinase protein THICK TASSEL DWARF1</fullName>
        <ecNumber>2.7.11.1</ecNumber>
    </recommendedName>
    <alternativeName>
        <fullName>CLAVATA1-like protein</fullName>
    </alternativeName>
    <alternativeName>
        <fullName>CLV1 related kinase 5</fullName>
        <shortName>ZmKIN5</shortName>
    </alternativeName>
</protein>